<evidence type="ECO:0000250" key="1"/>
<evidence type="ECO:0000305" key="2"/>
<protein>
    <recommendedName>
        <fullName>Hydroxylysine kinase</fullName>
        <shortName>5-hydroxy-L-lysine kinase</shortName>
        <ecNumber>2.7.1.81</ecNumber>
    </recommendedName>
</protein>
<keyword id="KW-0963">Cytoplasm</keyword>
<keyword id="KW-0418">Kinase</keyword>
<keyword id="KW-1185">Reference proteome</keyword>
<keyword id="KW-0808">Transferase</keyword>
<sequence>MAENKHIAALNNNKPALSEDQAVQLIESLYGVKVLNIKPLPSYDDQNFYIKSCSEDPNGCCEYVMKITNSEDSRYGELLEAQTSVMVFLCSNGVPAQKPVFTKNGQSLSLETIDYGSTIQKQAVRLLTYLPGTPLARVVATPEILFDIGKMAANIDKMLAENFLHPNKTCFERGQFIWNLSNTSLLRKYAHAVKETELQKIIEDVITQYETFVLPNLNCFRKCINHGDLNDHNILVEKTSSPGSIQEQYKVSGILDFSDMSFGYYIFELAITIMYMMIESNDPLHAGGYVLAGFQSVIPLTDEEKDALFFLVNCRFSQSLVMARYSVQLCPENEEYLMITAKTGWKHLQTLHDMGKEAVEKIWFETADSYVATH</sequence>
<comment type="function">
    <text evidence="1">Catalyzes the GTP-dependent phosphorylation of 5-hydroxy-L-lysine.</text>
</comment>
<comment type="catalytic activity">
    <reaction>
        <text>(5R)-5-hydroxy-L-lysine + GTP = (5R)-5-phosphooxy-L-lysine + GDP + H(+)</text>
        <dbReference type="Rhea" id="RHEA:19049"/>
        <dbReference type="ChEBI" id="CHEBI:15378"/>
        <dbReference type="ChEBI" id="CHEBI:37565"/>
        <dbReference type="ChEBI" id="CHEBI:57882"/>
        <dbReference type="ChEBI" id="CHEBI:58189"/>
        <dbReference type="ChEBI" id="CHEBI:58357"/>
        <dbReference type="EC" id="2.7.1.81"/>
    </reaction>
</comment>
<comment type="subcellular location">
    <subcellularLocation>
        <location evidence="2">Cytoplasm</location>
    </subcellularLocation>
</comment>
<comment type="similarity">
    <text evidence="2">Belongs to the aminoglycoside phosphotransferase family.</text>
</comment>
<gene>
    <name type="primary">hykk</name>
    <name type="synonym">agphd1</name>
</gene>
<dbReference type="EC" id="2.7.1.81"/>
<dbReference type="EMBL" id="BC059978">
    <property type="protein sequence ID" value="AAH59978.1"/>
    <property type="molecule type" value="mRNA"/>
</dbReference>
<dbReference type="RefSeq" id="NP_001083264.1">
    <property type="nucleotide sequence ID" value="NM_001089795.1"/>
</dbReference>
<dbReference type="SMR" id="Q6PB06"/>
<dbReference type="DNASU" id="398833"/>
<dbReference type="GeneID" id="398833"/>
<dbReference type="KEGG" id="xla:398833"/>
<dbReference type="AGR" id="Xenbase:XB-GENE-956853"/>
<dbReference type="CTD" id="398833"/>
<dbReference type="Xenbase" id="XB-GENE-956853">
    <property type="gene designation" value="hykk.L"/>
</dbReference>
<dbReference type="OrthoDB" id="9973935at2759"/>
<dbReference type="Proteomes" id="UP000186698">
    <property type="component" value="Chromosome 3L"/>
</dbReference>
<dbReference type="Bgee" id="398833">
    <property type="expression patterns" value="Expressed in kidney and 12 other cell types or tissues"/>
</dbReference>
<dbReference type="GO" id="GO:0005737">
    <property type="term" value="C:cytoplasm"/>
    <property type="evidence" value="ECO:0007669"/>
    <property type="project" value="UniProtKB-SubCell"/>
</dbReference>
<dbReference type="GO" id="GO:0019202">
    <property type="term" value="F:amino acid kinase activity"/>
    <property type="evidence" value="ECO:0000318"/>
    <property type="project" value="GO_Central"/>
</dbReference>
<dbReference type="GO" id="GO:0047992">
    <property type="term" value="F:hydroxylysine kinase activity"/>
    <property type="evidence" value="ECO:0007669"/>
    <property type="project" value="UniProtKB-EC"/>
</dbReference>
<dbReference type="FunFam" id="3.30.200.20:FF:000549">
    <property type="entry name" value="hydroxylysine kinase"/>
    <property type="match status" value="1"/>
</dbReference>
<dbReference type="FunFam" id="3.90.1200.10:FF:000007">
    <property type="entry name" value="hydroxylysine kinase isoform X1"/>
    <property type="match status" value="1"/>
</dbReference>
<dbReference type="Gene3D" id="3.90.1200.10">
    <property type="match status" value="1"/>
</dbReference>
<dbReference type="InterPro" id="IPR002575">
    <property type="entry name" value="Aminoglycoside_PTrfase"/>
</dbReference>
<dbReference type="InterPro" id="IPR011009">
    <property type="entry name" value="Kinase-like_dom_sf"/>
</dbReference>
<dbReference type="InterPro" id="IPR050249">
    <property type="entry name" value="Pseudomonas-type_ThrB"/>
</dbReference>
<dbReference type="PANTHER" id="PTHR21064">
    <property type="entry name" value="AMINOGLYCOSIDE PHOSPHOTRANSFERASE DOMAIN-CONTAINING PROTEIN-RELATED"/>
    <property type="match status" value="1"/>
</dbReference>
<dbReference type="PANTHER" id="PTHR21064:SF1">
    <property type="entry name" value="HYDROXYLYSINE KINASE"/>
    <property type="match status" value="1"/>
</dbReference>
<dbReference type="Pfam" id="PF01636">
    <property type="entry name" value="APH"/>
    <property type="match status" value="1"/>
</dbReference>
<dbReference type="SUPFAM" id="SSF56112">
    <property type="entry name" value="Protein kinase-like (PK-like)"/>
    <property type="match status" value="1"/>
</dbReference>
<organism>
    <name type="scientific">Xenopus laevis</name>
    <name type="common">African clawed frog</name>
    <dbReference type="NCBI Taxonomy" id="8355"/>
    <lineage>
        <taxon>Eukaryota</taxon>
        <taxon>Metazoa</taxon>
        <taxon>Chordata</taxon>
        <taxon>Craniata</taxon>
        <taxon>Vertebrata</taxon>
        <taxon>Euteleostomi</taxon>
        <taxon>Amphibia</taxon>
        <taxon>Batrachia</taxon>
        <taxon>Anura</taxon>
        <taxon>Pipoidea</taxon>
        <taxon>Pipidae</taxon>
        <taxon>Xenopodinae</taxon>
        <taxon>Xenopus</taxon>
        <taxon>Xenopus</taxon>
    </lineage>
</organism>
<name>HYKK_XENLA</name>
<feature type="chain" id="PRO_0000326047" description="Hydroxylysine kinase">
    <location>
        <begin position="1"/>
        <end position="374"/>
    </location>
</feature>
<feature type="active site" description="Proton acceptor" evidence="1">
    <location>
        <position position="228"/>
    </location>
</feature>
<proteinExistence type="evidence at transcript level"/>
<reference key="1">
    <citation type="submission" date="2003-10" db="EMBL/GenBank/DDBJ databases">
        <authorList>
            <consortium name="NIH - Xenopus Gene Collection (XGC) project"/>
        </authorList>
    </citation>
    <scope>NUCLEOTIDE SEQUENCE [LARGE SCALE MRNA]</scope>
    <source>
        <tissue>Kidney</tissue>
    </source>
</reference>
<accession>Q6PB06</accession>